<organism>
    <name type="scientific">Methylobacterium radiotolerans (strain ATCC 27329 / DSM 1819 / JCM 2831 / NBRC 15690 / NCIMB 10815 / 0-1)</name>
    <dbReference type="NCBI Taxonomy" id="426355"/>
    <lineage>
        <taxon>Bacteria</taxon>
        <taxon>Pseudomonadati</taxon>
        <taxon>Pseudomonadota</taxon>
        <taxon>Alphaproteobacteria</taxon>
        <taxon>Hyphomicrobiales</taxon>
        <taxon>Methylobacteriaceae</taxon>
        <taxon>Methylobacterium</taxon>
    </lineage>
</organism>
<accession>B1M597</accession>
<sequence>MAGERAQNLQDTFLNHVRKNKIPLTIFLVNGVKLQGVVTWFDNFCVLLRRDGHSQLVYKHAISTIMPGHPVQLFEPDETAEKA</sequence>
<protein>
    <recommendedName>
        <fullName evidence="1">RNA-binding protein Hfq</fullName>
    </recommendedName>
</protein>
<name>HFQ_METRJ</name>
<dbReference type="EMBL" id="CP001001">
    <property type="protein sequence ID" value="ACB23488.1"/>
    <property type="molecule type" value="Genomic_DNA"/>
</dbReference>
<dbReference type="RefSeq" id="WP_007563033.1">
    <property type="nucleotide sequence ID" value="NC_010505.1"/>
</dbReference>
<dbReference type="SMR" id="B1M597"/>
<dbReference type="STRING" id="426355.Mrad2831_1493"/>
<dbReference type="GeneID" id="96606291"/>
<dbReference type="KEGG" id="mrd:Mrad2831_1493"/>
<dbReference type="eggNOG" id="COG1923">
    <property type="taxonomic scope" value="Bacteria"/>
</dbReference>
<dbReference type="HOGENOM" id="CLU_113688_0_0_5"/>
<dbReference type="OrthoDB" id="9799751at2"/>
<dbReference type="Proteomes" id="UP000006589">
    <property type="component" value="Chromosome"/>
</dbReference>
<dbReference type="GO" id="GO:0005829">
    <property type="term" value="C:cytosol"/>
    <property type="evidence" value="ECO:0007669"/>
    <property type="project" value="TreeGrafter"/>
</dbReference>
<dbReference type="GO" id="GO:0003723">
    <property type="term" value="F:RNA binding"/>
    <property type="evidence" value="ECO:0007669"/>
    <property type="project" value="UniProtKB-UniRule"/>
</dbReference>
<dbReference type="GO" id="GO:0006355">
    <property type="term" value="P:regulation of DNA-templated transcription"/>
    <property type="evidence" value="ECO:0007669"/>
    <property type="project" value="InterPro"/>
</dbReference>
<dbReference type="GO" id="GO:0043487">
    <property type="term" value="P:regulation of RNA stability"/>
    <property type="evidence" value="ECO:0007669"/>
    <property type="project" value="TreeGrafter"/>
</dbReference>
<dbReference type="GO" id="GO:0045974">
    <property type="term" value="P:regulation of translation, ncRNA-mediated"/>
    <property type="evidence" value="ECO:0007669"/>
    <property type="project" value="TreeGrafter"/>
</dbReference>
<dbReference type="CDD" id="cd01716">
    <property type="entry name" value="Hfq"/>
    <property type="match status" value="1"/>
</dbReference>
<dbReference type="FunFam" id="2.30.30.100:FF:000001">
    <property type="entry name" value="RNA-binding protein Hfq"/>
    <property type="match status" value="1"/>
</dbReference>
<dbReference type="Gene3D" id="2.30.30.100">
    <property type="match status" value="1"/>
</dbReference>
<dbReference type="HAMAP" id="MF_00436">
    <property type="entry name" value="Hfq"/>
    <property type="match status" value="1"/>
</dbReference>
<dbReference type="InterPro" id="IPR005001">
    <property type="entry name" value="Hfq"/>
</dbReference>
<dbReference type="InterPro" id="IPR010920">
    <property type="entry name" value="LSM_dom_sf"/>
</dbReference>
<dbReference type="InterPro" id="IPR047575">
    <property type="entry name" value="Sm"/>
</dbReference>
<dbReference type="NCBIfam" id="TIGR02383">
    <property type="entry name" value="Hfq"/>
    <property type="match status" value="1"/>
</dbReference>
<dbReference type="NCBIfam" id="NF001602">
    <property type="entry name" value="PRK00395.1"/>
    <property type="match status" value="1"/>
</dbReference>
<dbReference type="PANTHER" id="PTHR34772">
    <property type="entry name" value="RNA-BINDING PROTEIN HFQ"/>
    <property type="match status" value="1"/>
</dbReference>
<dbReference type="PANTHER" id="PTHR34772:SF1">
    <property type="entry name" value="RNA-BINDING PROTEIN HFQ"/>
    <property type="match status" value="1"/>
</dbReference>
<dbReference type="Pfam" id="PF17209">
    <property type="entry name" value="Hfq"/>
    <property type="match status" value="1"/>
</dbReference>
<dbReference type="SUPFAM" id="SSF50182">
    <property type="entry name" value="Sm-like ribonucleoproteins"/>
    <property type="match status" value="1"/>
</dbReference>
<dbReference type="PROSITE" id="PS52002">
    <property type="entry name" value="SM"/>
    <property type="match status" value="1"/>
</dbReference>
<keyword id="KW-0694">RNA-binding</keyword>
<keyword id="KW-0346">Stress response</keyword>
<comment type="function">
    <text evidence="1">RNA chaperone that binds small regulatory RNA (sRNAs) and mRNAs to facilitate mRNA translational regulation in response to envelope stress, environmental stress and changes in metabolite concentrations. Also binds with high specificity to tRNAs.</text>
</comment>
<comment type="subunit">
    <text evidence="1">Homohexamer.</text>
</comment>
<comment type="similarity">
    <text evidence="1">Belongs to the Hfq family.</text>
</comment>
<proteinExistence type="inferred from homology"/>
<feature type="chain" id="PRO_1000190340" description="RNA-binding protein Hfq">
    <location>
        <begin position="1"/>
        <end position="83"/>
    </location>
</feature>
<feature type="domain" description="Sm" evidence="2">
    <location>
        <begin position="11"/>
        <end position="71"/>
    </location>
</feature>
<gene>
    <name evidence="1" type="primary">hfq</name>
    <name type="ordered locus">Mrad2831_1493</name>
</gene>
<evidence type="ECO:0000255" key="1">
    <source>
        <dbReference type="HAMAP-Rule" id="MF_00436"/>
    </source>
</evidence>
<evidence type="ECO:0000255" key="2">
    <source>
        <dbReference type="PROSITE-ProRule" id="PRU01346"/>
    </source>
</evidence>
<reference key="1">
    <citation type="submission" date="2008-03" db="EMBL/GenBank/DDBJ databases">
        <title>Complete sequence of chromosome of Methylobacterium radiotolerans JCM 2831.</title>
        <authorList>
            <consortium name="US DOE Joint Genome Institute"/>
            <person name="Copeland A."/>
            <person name="Lucas S."/>
            <person name="Lapidus A."/>
            <person name="Glavina del Rio T."/>
            <person name="Dalin E."/>
            <person name="Tice H."/>
            <person name="Bruce D."/>
            <person name="Goodwin L."/>
            <person name="Pitluck S."/>
            <person name="Kiss H."/>
            <person name="Brettin T."/>
            <person name="Detter J.C."/>
            <person name="Han C."/>
            <person name="Kuske C.R."/>
            <person name="Schmutz J."/>
            <person name="Larimer F."/>
            <person name="Land M."/>
            <person name="Hauser L."/>
            <person name="Kyrpides N."/>
            <person name="Mikhailova N."/>
            <person name="Marx C.J."/>
            <person name="Richardson P."/>
        </authorList>
    </citation>
    <scope>NUCLEOTIDE SEQUENCE [LARGE SCALE GENOMIC DNA]</scope>
    <source>
        <strain>ATCC 27329 / DSM 1819 / JCM 2831 / NBRC 15690 / NCIMB 10815 / 0-1</strain>
    </source>
</reference>